<name>RL28_BACC0</name>
<keyword id="KW-0687">Ribonucleoprotein</keyword>
<keyword id="KW-0689">Ribosomal protein</keyword>
<dbReference type="EMBL" id="CP001283">
    <property type="protein sequence ID" value="ACK88828.1"/>
    <property type="molecule type" value="Genomic_DNA"/>
</dbReference>
<dbReference type="RefSeq" id="WP_000124776.1">
    <property type="nucleotide sequence ID" value="NC_011773.1"/>
</dbReference>
<dbReference type="SMR" id="B7JJU5"/>
<dbReference type="GeneID" id="93007254"/>
<dbReference type="KEGG" id="bcu:BCAH820_3872"/>
<dbReference type="HOGENOM" id="CLU_064548_7_1_9"/>
<dbReference type="Proteomes" id="UP000001363">
    <property type="component" value="Chromosome"/>
</dbReference>
<dbReference type="GO" id="GO:1990904">
    <property type="term" value="C:ribonucleoprotein complex"/>
    <property type="evidence" value="ECO:0007669"/>
    <property type="project" value="UniProtKB-KW"/>
</dbReference>
<dbReference type="GO" id="GO:0005840">
    <property type="term" value="C:ribosome"/>
    <property type="evidence" value="ECO:0007669"/>
    <property type="project" value="UniProtKB-KW"/>
</dbReference>
<dbReference type="GO" id="GO:0003735">
    <property type="term" value="F:structural constituent of ribosome"/>
    <property type="evidence" value="ECO:0007669"/>
    <property type="project" value="InterPro"/>
</dbReference>
<dbReference type="GO" id="GO:0006412">
    <property type="term" value="P:translation"/>
    <property type="evidence" value="ECO:0007669"/>
    <property type="project" value="UniProtKB-UniRule"/>
</dbReference>
<dbReference type="Gene3D" id="2.30.170.40">
    <property type="entry name" value="Ribosomal protein L28/L24"/>
    <property type="match status" value="1"/>
</dbReference>
<dbReference type="HAMAP" id="MF_00373">
    <property type="entry name" value="Ribosomal_bL28"/>
    <property type="match status" value="1"/>
</dbReference>
<dbReference type="InterPro" id="IPR050096">
    <property type="entry name" value="Bacterial_rp_bL28"/>
</dbReference>
<dbReference type="InterPro" id="IPR026569">
    <property type="entry name" value="Ribosomal_bL28"/>
</dbReference>
<dbReference type="InterPro" id="IPR034704">
    <property type="entry name" value="Ribosomal_bL28/bL31-like_sf"/>
</dbReference>
<dbReference type="InterPro" id="IPR001383">
    <property type="entry name" value="Ribosomal_bL28_bact-type"/>
</dbReference>
<dbReference type="InterPro" id="IPR037147">
    <property type="entry name" value="Ribosomal_bL28_sf"/>
</dbReference>
<dbReference type="NCBIfam" id="TIGR00009">
    <property type="entry name" value="L28"/>
    <property type="match status" value="1"/>
</dbReference>
<dbReference type="PANTHER" id="PTHR39080">
    <property type="entry name" value="50S RIBOSOMAL PROTEIN L28"/>
    <property type="match status" value="1"/>
</dbReference>
<dbReference type="PANTHER" id="PTHR39080:SF1">
    <property type="entry name" value="LARGE RIBOSOMAL SUBUNIT PROTEIN BL28A"/>
    <property type="match status" value="1"/>
</dbReference>
<dbReference type="Pfam" id="PF00830">
    <property type="entry name" value="Ribosomal_L28"/>
    <property type="match status" value="1"/>
</dbReference>
<dbReference type="SUPFAM" id="SSF143800">
    <property type="entry name" value="L28p-like"/>
    <property type="match status" value="1"/>
</dbReference>
<comment type="similarity">
    <text evidence="1">Belongs to the bacterial ribosomal protein bL28 family.</text>
</comment>
<accession>B7JJU5</accession>
<organism>
    <name type="scientific">Bacillus cereus (strain AH820)</name>
    <dbReference type="NCBI Taxonomy" id="405535"/>
    <lineage>
        <taxon>Bacteria</taxon>
        <taxon>Bacillati</taxon>
        <taxon>Bacillota</taxon>
        <taxon>Bacilli</taxon>
        <taxon>Bacillales</taxon>
        <taxon>Bacillaceae</taxon>
        <taxon>Bacillus</taxon>
        <taxon>Bacillus cereus group</taxon>
    </lineage>
</organism>
<gene>
    <name evidence="1" type="primary">rpmB</name>
    <name type="ordered locus">BCAH820_3872</name>
</gene>
<protein>
    <recommendedName>
        <fullName evidence="1">Large ribosomal subunit protein bL28</fullName>
    </recommendedName>
    <alternativeName>
        <fullName evidence="3">50S ribosomal protein L28</fullName>
    </alternativeName>
</protein>
<evidence type="ECO:0000255" key="1">
    <source>
        <dbReference type="HAMAP-Rule" id="MF_00373"/>
    </source>
</evidence>
<evidence type="ECO:0000256" key="2">
    <source>
        <dbReference type="SAM" id="MobiDB-lite"/>
    </source>
</evidence>
<evidence type="ECO:0000305" key="3"/>
<reference key="1">
    <citation type="submission" date="2008-10" db="EMBL/GenBank/DDBJ databases">
        <title>Genome sequence of Bacillus cereus AH820.</title>
        <authorList>
            <person name="Dodson R.J."/>
            <person name="Durkin A.S."/>
            <person name="Rosovitz M.J."/>
            <person name="Rasko D.A."/>
            <person name="Hoffmaster A."/>
            <person name="Ravel J."/>
            <person name="Sutton G."/>
        </authorList>
    </citation>
    <scope>NUCLEOTIDE SEQUENCE [LARGE SCALE GENOMIC DNA]</scope>
    <source>
        <strain>AH820</strain>
    </source>
</reference>
<proteinExistence type="inferred from homology"/>
<sequence>MARVCAITGRKARSGNSRSHAMNATKRKWGANLQKVRVRIDGKVQRVYVSARALKSGKIERV</sequence>
<feature type="chain" id="PRO_1000121581" description="Large ribosomal subunit protein bL28">
    <location>
        <begin position="1"/>
        <end position="62"/>
    </location>
</feature>
<feature type="region of interest" description="Disordered" evidence="2">
    <location>
        <begin position="1"/>
        <end position="28"/>
    </location>
</feature>